<proteinExistence type="inferred from homology"/>
<keyword id="KW-0004">4Fe-4S</keyword>
<keyword id="KW-0963">Cytoplasm</keyword>
<keyword id="KW-0408">Iron</keyword>
<keyword id="KW-0411">Iron-sulfur</keyword>
<keyword id="KW-0479">Metal-binding</keyword>
<keyword id="KW-1185">Reference proteome</keyword>
<keyword id="KW-0949">S-adenosyl-L-methionine</keyword>
<keyword id="KW-0808">Transferase</keyword>
<organism>
    <name type="scientific">Francisella tularensis subsp. tularensis (strain SCHU S4 / Schu 4)</name>
    <dbReference type="NCBI Taxonomy" id="177416"/>
    <lineage>
        <taxon>Bacteria</taxon>
        <taxon>Pseudomonadati</taxon>
        <taxon>Pseudomonadota</taxon>
        <taxon>Gammaproteobacteria</taxon>
        <taxon>Thiotrichales</taxon>
        <taxon>Francisellaceae</taxon>
        <taxon>Francisella</taxon>
    </lineage>
</organism>
<evidence type="ECO:0000255" key="1">
    <source>
        <dbReference type="HAMAP-Rule" id="MF_00206"/>
    </source>
</evidence>
<evidence type="ECO:0000255" key="2">
    <source>
        <dbReference type="PROSITE-ProRule" id="PRU01266"/>
    </source>
</evidence>
<accession>Q5NH21</accession>
<dbReference type="EC" id="2.8.1.8" evidence="1"/>
<dbReference type="EMBL" id="AJ749949">
    <property type="protein sequence ID" value="CAG45286.1"/>
    <property type="molecule type" value="Genomic_DNA"/>
</dbReference>
<dbReference type="RefSeq" id="WP_003018819.1">
    <property type="nucleotide sequence ID" value="NZ_CP010290.1"/>
</dbReference>
<dbReference type="RefSeq" id="YP_169671.1">
    <property type="nucleotide sequence ID" value="NC_006570.2"/>
</dbReference>
<dbReference type="SMR" id="Q5NH21"/>
<dbReference type="IntAct" id="Q5NH21">
    <property type="interactions" value="3"/>
</dbReference>
<dbReference type="STRING" id="177416.FTT_0653"/>
<dbReference type="DNASU" id="3190780"/>
<dbReference type="EnsemblBacteria" id="CAG45286">
    <property type="protein sequence ID" value="CAG45286"/>
    <property type="gene ID" value="FTT_0653"/>
</dbReference>
<dbReference type="GeneID" id="75265235"/>
<dbReference type="KEGG" id="ftu:FTT_0653"/>
<dbReference type="eggNOG" id="COG0320">
    <property type="taxonomic scope" value="Bacteria"/>
</dbReference>
<dbReference type="OrthoDB" id="9787898at2"/>
<dbReference type="UniPathway" id="UPA00538">
    <property type="reaction ID" value="UER00593"/>
</dbReference>
<dbReference type="Proteomes" id="UP000001174">
    <property type="component" value="Chromosome"/>
</dbReference>
<dbReference type="GO" id="GO:0005737">
    <property type="term" value="C:cytoplasm"/>
    <property type="evidence" value="ECO:0007669"/>
    <property type="project" value="UniProtKB-SubCell"/>
</dbReference>
<dbReference type="GO" id="GO:0051539">
    <property type="term" value="F:4 iron, 4 sulfur cluster binding"/>
    <property type="evidence" value="ECO:0007669"/>
    <property type="project" value="UniProtKB-UniRule"/>
</dbReference>
<dbReference type="GO" id="GO:0016992">
    <property type="term" value="F:lipoate synthase activity"/>
    <property type="evidence" value="ECO:0007669"/>
    <property type="project" value="UniProtKB-UniRule"/>
</dbReference>
<dbReference type="GO" id="GO:0046872">
    <property type="term" value="F:metal ion binding"/>
    <property type="evidence" value="ECO:0007669"/>
    <property type="project" value="UniProtKB-KW"/>
</dbReference>
<dbReference type="FunFam" id="3.20.20.70:FF:000040">
    <property type="entry name" value="Lipoyl synthase"/>
    <property type="match status" value="1"/>
</dbReference>
<dbReference type="Gene3D" id="3.20.20.70">
    <property type="entry name" value="Aldolase class I"/>
    <property type="match status" value="1"/>
</dbReference>
<dbReference type="HAMAP" id="MF_00206">
    <property type="entry name" value="Lipoyl_synth"/>
    <property type="match status" value="1"/>
</dbReference>
<dbReference type="InterPro" id="IPR013785">
    <property type="entry name" value="Aldolase_TIM"/>
</dbReference>
<dbReference type="InterPro" id="IPR006638">
    <property type="entry name" value="Elp3/MiaA/NifB-like_rSAM"/>
</dbReference>
<dbReference type="InterPro" id="IPR031691">
    <property type="entry name" value="LIAS_N"/>
</dbReference>
<dbReference type="InterPro" id="IPR003698">
    <property type="entry name" value="Lipoyl_synth"/>
</dbReference>
<dbReference type="InterPro" id="IPR007197">
    <property type="entry name" value="rSAM"/>
</dbReference>
<dbReference type="NCBIfam" id="TIGR00510">
    <property type="entry name" value="lipA"/>
    <property type="match status" value="1"/>
</dbReference>
<dbReference type="NCBIfam" id="NF004019">
    <property type="entry name" value="PRK05481.1"/>
    <property type="match status" value="1"/>
</dbReference>
<dbReference type="NCBIfam" id="NF009544">
    <property type="entry name" value="PRK12928.1"/>
    <property type="match status" value="1"/>
</dbReference>
<dbReference type="PANTHER" id="PTHR10949">
    <property type="entry name" value="LIPOYL SYNTHASE"/>
    <property type="match status" value="1"/>
</dbReference>
<dbReference type="PANTHER" id="PTHR10949:SF0">
    <property type="entry name" value="LIPOYL SYNTHASE, MITOCHONDRIAL"/>
    <property type="match status" value="1"/>
</dbReference>
<dbReference type="Pfam" id="PF16881">
    <property type="entry name" value="LIAS_N"/>
    <property type="match status" value="1"/>
</dbReference>
<dbReference type="Pfam" id="PF04055">
    <property type="entry name" value="Radical_SAM"/>
    <property type="match status" value="1"/>
</dbReference>
<dbReference type="PIRSF" id="PIRSF005963">
    <property type="entry name" value="Lipoyl_synth"/>
    <property type="match status" value="1"/>
</dbReference>
<dbReference type="SFLD" id="SFLDF00271">
    <property type="entry name" value="lipoyl_synthase"/>
    <property type="match status" value="1"/>
</dbReference>
<dbReference type="SFLD" id="SFLDG01058">
    <property type="entry name" value="lipoyl_synthase_like"/>
    <property type="match status" value="1"/>
</dbReference>
<dbReference type="SMART" id="SM00729">
    <property type="entry name" value="Elp3"/>
    <property type="match status" value="1"/>
</dbReference>
<dbReference type="SUPFAM" id="SSF102114">
    <property type="entry name" value="Radical SAM enzymes"/>
    <property type="match status" value="1"/>
</dbReference>
<dbReference type="PROSITE" id="PS51918">
    <property type="entry name" value="RADICAL_SAM"/>
    <property type="match status" value="1"/>
</dbReference>
<name>LIPA_FRATT</name>
<gene>
    <name evidence="1" type="primary">lipA</name>
    <name type="ordered locus">FTT_0653</name>
</gene>
<sequence length="327" mass="36840">MKEISGIKVKVESGSKYTTDHGFHAVKDGIRNKKENAVHVRKPDWLKVQKQDSKEYLKVKSITKKHKLSTVCEEARCPNINECWSHGTATIMLMGSVCTRACKFCSVDTGNPKGWLDKDEPMNAAESVKLMGLEYVVLTSVDRDDLEDGGAGHYAATITAIKNLDENIKVEALTPDFAGINENIDKIINTKVDVIAQNIETVERLTHPVRDPRAGYWQTLNFLKYVKQKSPNVLTKTSIMVGLGETDEEIYKTMDDARSVGVDIITLGQYMQPTKHHLSVERFVTPQQFEEYRKVGLEKGFLEVASGPMVRSSYRADRVFKRNNLDL</sequence>
<feature type="chain" id="PRO_0000325254" description="Lipoyl synthase">
    <location>
        <begin position="1"/>
        <end position="327"/>
    </location>
</feature>
<feature type="domain" description="Radical SAM core" evidence="2">
    <location>
        <begin position="83"/>
        <end position="302"/>
    </location>
</feature>
<feature type="binding site" evidence="1">
    <location>
        <position position="72"/>
    </location>
    <ligand>
        <name>[4Fe-4S] cluster</name>
        <dbReference type="ChEBI" id="CHEBI:49883"/>
        <label>1</label>
    </ligand>
</feature>
<feature type="binding site" evidence="1">
    <location>
        <position position="77"/>
    </location>
    <ligand>
        <name>[4Fe-4S] cluster</name>
        <dbReference type="ChEBI" id="CHEBI:49883"/>
        <label>1</label>
    </ligand>
</feature>
<feature type="binding site" evidence="1">
    <location>
        <position position="83"/>
    </location>
    <ligand>
        <name>[4Fe-4S] cluster</name>
        <dbReference type="ChEBI" id="CHEBI:49883"/>
        <label>1</label>
    </ligand>
</feature>
<feature type="binding site" evidence="1">
    <location>
        <position position="98"/>
    </location>
    <ligand>
        <name>[4Fe-4S] cluster</name>
        <dbReference type="ChEBI" id="CHEBI:49883"/>
        <label>2</label>
        <note>4Fe-4S-S-AdoMet</note>
    </ligand>
</feature>
<feature type="binding site" evidence="1">
    <location>
        <position position="102"/>
    </location>
    <ligand>
        <name>[4Fe-4S] cluster</name>
        <dbReference type="ChEBI" id="CHEBI:49883"/>
        <label>2</label>
        <note>4Fe-4S-S-AdoMet</note>
    </ligand>
</feature>
<feature type="binding site" evidence="1">
    <location>
        <position position="105"/>
    </location>
    <ligand>
        <name>[4Fe-4S] cluster</name>
        <dbReference type="ChEBI" id="CHEBI:49883"/>
        <label>2</label>
        <note>4Fe-4S-S-AdoMet</note>
    </ligand>
</feature>
<feature type="binding site" evidence="1">
    <location>
        <position position="313"/>
    </location>
    <ligand>
        <name>[4Fe-4S] cluster</name>
        <dbReference type="ChEBI" id="CHEBI:49883"/>
        <label>1</label>
    </ligand>
</feature>
<protein>
    <recommendedName>
        <fullName evidence="1">Lipoyl synthase</fullName>
        <ecNumber evidence="1">2.8.1.8</ecNumber>
    </recommendedName>
    <alternativeName>
        <fullName evidence="1">Lip-syn</fullName>
        <shortName evidence="1">LS</shortName>
    </alternativeName>
    <alternativeName>
        <fullName evidence="1">Lipoate synthase</fullName>
    </alternativeName>
    <alternativeName>
        <fullName evidence="1">Lipoic acid synthase</fullName>
    </alternativeName>
    <alternativeName>
        <fullName evidence="1">Sulfur insertion protein LipA</fullName>
    </alternativeName>
</protein>
<comment type="function">
    <text evidence="1">Catalyzes the radical-mediated insertion of two sulfur atoms into the C-6 and C-8 positions of the octanoyl moiety bound to the lipoyl domains of lipoate-dependent enzymes, thereby converting the octanoylated domains into lipoylated derivatives.</text>
</comment>
<comment type="catalytic activity">
    <reaction evidence="1">
        <text>[[Fe-S] cluster scaffold protein carrying a second [4Fe-4S](2+) cluster] + N(6)-octanoyl-L-lysyl-[protein] + 2 oxidized [2Fe-2S]-[ferredoxin] + 2 S-adenosyl-L-methionine + 4 H(+) = [[Fe-S] cluster scaffold protein] + N(6)-[(R)-dihydrolipoyl]-L-lysyl-[protein] + 4 Fe(3+) + 2 hydrogen sulfide + 2 5'-deoxyadenosine + 2 L-methionine + 2 reduced [2Fe-2S]-[ferredoxin]</text>
        <dbReference type="Rhea" id="RHEA:16585"/>
        <dbReference type="Rhea" id="RHEA-COMP:9928"/>
        <dbReference type="Rhea" id="RHEA-COMP:10000"/>
        <dbReference type="Rhea" id="RHEA-COMP:10001"/>
        <dbReference type="Rhea" id="RHEA-COMP:10475"/>
        <dbReference type="Rhea" id="RHEA-COMP:14568"/>
        <dbReference type="Rhea" id="RHEA-COMP:14569"/>
        <dbReference type="ChEBI" id="CHEBI:15378"/>
        <dbReference type="ChEBI" id="CHEBI:17319"/>
        <dbReference type="ChEBI" id="CHEBI:29034"/>
        <dbReference type="ChEBI" id="CHEBI:29919"/>
        <dbReference type="ChEBI" id="CHEBI:33722"/>
        <dbReference type="ChEBI" id="CHEBI:33737"/>
        <dbReference type="ChEBI" id="CHEBI:33738"/>
        <dbReference type="ChEBI" id="CHEBI:57844"/>
        <dbReference type="ChEBI" id="CHEBI:59789"/>
        <dbReference type="ChEBI" id="CHEBI:78809"/>
        <dbReference type="ChEBI" id="CHEBI:83100"/>
        <dbReference type="EC" id="2.8.1.8"/>
    </reaction>
</comment>
<comment type="cofactor">
    <cofactor evidence="1">
        <name>[4Fe-4S] cluster</name>
        <dbReference type="ChEBI" id="CHEBI:49883"/>
    </cofactor>
    <text evidence="1">Binds 2 [4Fe-4S] clusters per subunit. One cluster is coordinated with 3 cysteines and an exchangeable S-adenosyl-L-methionine.</text>
</comment>
<comment type="pathway">
    <text evidence="1">Protein modification; protein lipoylation via endogenous pathway; protein N(6)-(lipoyl)lysine from octanoyl-[acyl-carrier-protein]: step 2/2.</text>
</comment>
<comment type="subcellular location">
    <subcellularLocation>
        <location evidence="1">Cytoplasm</location>
    </subcellularLocation>
</comment>
<comment type="similarity">
    <text evidence="1">Belongs to the radical SAM superfamily. Lipoyl synthase family.</text>
</comment>
<reference key="1">
    <citation type="journal article" date="2005" name="Nat. Genet.">
        <title>The complete genome sequence of Francisella tularensis, the causative agent of tularemia.</title>
        <authorList>
            <person name="Larsson P."/>
            <person name="Oyston P.C.F."/>
            <person name="Chain P."/>
            <person name="Chu M.C."/>
            <person name="Duffield M."/>
            <person name="Fuxelius H.-H."/>
            <person name="Garcia E."/>
            <person name="Haelltorp G."/>
            <person name="Johansson D."/>
            <person name="Isherwood K.E."/>
            <person name="Karp P.D."/>
            <person name="Larsson E."/>
            <person name="Liu Y."/>
            <person name="Michell S."/>
            <person name="Prior J."/>
            <person name="Prior R."/>
            <person name="Malfatti S."/>
            <person name="Sjoestedt A."/>
            <person name="Svensson K."/>
            <person name="Thompson N."/>
            <person name="Vergez L."/>
            <person name="Wagg J.K."/>
            <person name="Wren B.W."/>
            <person name="Lindler L.E."/>
            <person name="Andersson S.G.E."/>
            <person name="Forsman M."/>
            <person name="Titball R.W."/>
        </authorList>
    </citation>
    <scope>NUCLEOTIDE SEQUENCE [LARGE SCALE GENOMIC DNA]</scope>
    <source>
        <strain>SCHU S4 / Schu 4</strain>
    </source>
</reference>